<comment type="subunit">
    <text evidence="1">Part of the 50S ribosomal subunit. Contacts protein L32.</text>
</comment>
<comment type="similarity">
    <text evidence="1">Belongs to the bacterial ribosomal protein bL17 family.</text>
</comment>
<name>RL17_COPPD</name>
<keyword id="KW-1185">Reference proteome</keyword>
<keyword id="KW-0687">Ribonucleoprotein</keyword>
<keyword id="KW-0689">Ribosomal protein</keyword>
<gene>
    <name evidence="1" type="primary">rplQ</name>
    <name type="ordered locus">COPRO5265_0984</name>
</gene>
<feature type="chain" id="PRO_1000144404" description="Large ribosomal subunit protein bL17">
    <location>
        <begin position="1"/>
        <end position="117"/>
    </location>
</feature>
<evidence type="ECO:0000255" key="1">
    <source>
        <dbReference type="HAMAP-Rule" id="MF_01368"/>
    </source>
</evidence>
<evidence type="ECO:0000305" key="2"/>
<reference key="1">
    <citation type="submission" date="2008-08" db="EMBL/GenBank/DDBJ databases">
        <title>The complete genome sequence of Coprothermobacter proteolyticus strain ATCC 5245 / DSM 5265 / BT.</title>
        <authorList>
            <person name="Dodson R.J."/>
            <person name="Durkin A.S."/>
            <person name="Wu M."/>
            <person name="Eisen J."/>
            <person name="Sutton G."/>
        </authorList>
    </citation>
    <scope>NUCLEOTIDE SEQUENCE [LARGE SCALE GENOMIC DNA]</scope>
    <source>
        <strain>ATCC 35245 / DSM 5265 / OCM 4 / BT</strain>
    </source>
</reference>
<proteinExistence type="inferred from homology"/>
<protein>
    <recommendedName>
        <fullName evidence="1">Large ribosomal subunit protein bL17</fullName>
    </recommendedName>
    <alternativeName>
        <fullName evidence="2">50S ribosomal protein L17</fullName>
    </alternativeName>
</protein>
<accession>B5Y959</accession>
<sequence>MKHRVDGRKLGRKTEARIALLRTLSKQLVIHGEVETTLPKAKELKRFADKLVTHAKSKELHDIRLVEKHLGDRELVKKLTDEIAPRFAEVNGGYTTVLKTGFRKGDGAPTAIVRWSK</sequence>
<organism>
    <name type="scientific">Coprothermobacter proteolyticus (strain ATCC 35245 / DSM 5265 / OCM 4 / BT)</name>
    <dbReference type="NCBI Taxonomy" id="309798"/>
    <lineage>
        <taxon>Bacteria</taxon>
        <taxon>Pseudomonadati</taxon>
        <taxon>Coprothermobacterota</taxon>
        <taxon>Coprothermobacteria</taxon>
        <taxon>Coprothermobacterales</taxon>
        <taxon>Coprothermobacteraceae</taxon>
        <taxon>Coprothermobacter</taxon>
    </lineage>
</organism>
<dbReference type="EMBL" id="CP001145">
    <property type="protein sequence ID" value="ACI17524.1"/>
    <property type="molecule type" value="Genomic_DNA"/>
</dbReference>
<dbReference type="RefSeq" id="WP_012544176.1">
    <property type="nucleotide sequence ID" value="NC_011295.1"/>
</dbReference>
<dbReference type="SMR" id="B5Y959"/>
<dbReference type="STRING" id="309798.COPRO5265_0984"/>
<dbReference type="KEGG" id="cpo:COPRO5265_0984"/>
<dbReference type="eggNOG" id="COG0203">
    <property type="taxonomic scope" value="Bacteria"/>
</dbReference>
<dbReference type="HOGENOM" id="CLU_074407_2_0_9"/>
<dbReference type="OrthoDB" id="9809073at2"/>
<dbReference type="Proteomes" id="UP000001732">
    <property type="component" value="Chromosome"/>
</dbReference>
<dbReference type="GO" id="GO:0022625">
    <property type="term" value="C:cytosolic large ribosomal subunit"/>
    <property type="evidence" value="ECO:0007669"/>
    <property type="project" value="TreeGrafter"/>
</dbReference>
<dbReference type="GO" id="GO:0003735">
    <property type="term" value="F:structural constituent of ribosome"/>
    <property type="evidence" value="ECO:0007669"/>
    <property type="project" value="InterPro"/>
</dbReference>
<dbReference type="GO" id="GO:0006412">
    <property type="term" value="P:translation"/>
    <property type="evidence" value="ECO:0007669"/>
    <property type="project" value="UniProtKB-UniRule"/>
</dbReference>
<dbReference type="Gene3D" id="3.90.1030.10">
    <property type="entry name" value="Ribosomal protein L17"/>
    <property type="match status" value="1"/>
</dbReference>
<dbReference type="HAMAP" id="MF_01368">
    <property type="entry name" value="Ribosomal_bL17"/>
    <property type="match status" value="1"/>
</dbReference>
<dbReference type="InterPro" id="IPR000456">
    <property type="entry name" value="Ribosomal_bL17"/>
</dbReference>
<dbReference type="InterPro" id="IPR036373">
    <property type="entry name" value="Ribosomal_bL17_sf"/>
</dbReference>
<dbReference type="NCBIfam" id="TIGR00059">
    <property type="entry name" value="L17"/>
    <property type="match status" value="1"/>
</dbReference>
<dbReference type="PANTHER" id="PTHR14413:SF16">
    <property type="entry name" value="LARGE RIBOSOMAL SUBUNIT PROTEIN BL17M"/>
    <property type="match status" value="1"/>
</dbReference>
<dbReference type="PANTHER" id="PTHR14413">
    <property type="entry name" value="RIBOSOMAL PROTEIN L17"/>
    <property type="match status" value="1"/>
</dbReference>
<dbReference type="Pfam" id="PF01196">
    <property type="entry name" value="Ribosomal_L17"/>
    <property type="match status" value="1"/>
</dbReference>
<dbReference type="SUPFAM" id="SSF64263">
    <property type="entry name" value="Prokaryotic ribosomal protein L17"/>
    <property type="match status" value="1"/>
</dbReference>